<gene>
    <name type="primary">Chd5</name>
    <name type="synonym">Kiaa0444</name>
</gene>
<reference key="1">
    <citation type="journal article" date="2009" name="PLoS Biol.">
        <title>Lineage-specific biology revealed by a finished genome assembly of the mouse.</title>
        <authorList>
            <person name="Church D.M."/>
            <person name="Goodstadt L."/>
            <person name="Hillier L.W."/>
            <person name="Zody M.C."/>
            <person name="Goldstein S."/>
            <person name="She X."/>
            <person name="Bult C.J."/>
            <person name="Agarwala R."/>
            <person name="Cherry J.L."/>
            <person name="DiCuccio M."/>
            <person name="Hlavina W."/>
            <person name="Kapustin Y."/>
            <person name="Meric P."/>
            <person name="Maglott D."/>
            <person name="Birtle Z."/>
            <person name="Marques A.C."/>
            <person name="Graves T."/>
            <person name="Zhou S."/>
            <person name="Teague B."/>
            <person name="Potamousis K."/>
            <person name="Churas C."/>
            <person name="Place M."/>
            <person name="Herschleb J."/>
            <person name="Runnheim R."/>
            <person name="Forrest D."/>
            <person name="Amos-Landgraf J."/>
            <person name="Schwartz D.C."/>
            <person name="Cheng Z."/>
            <person name="Lindblad-Toh K."/>
            <person name="Eichler E.E."/>
            <person name="Ponting C.P."/>
        </authorList>
    </citation>
    <scope>NUCLEOTIDE SEQUENCE [LARGE SCALE GENOMIC DNA]</scope>
    <source>
        <strain>C57BL/6J</strain>
    </source>
</reference>
<reference key="2">
    <citation type="journal article" date="2003" name="DNA Res.">
        <title>Prediction of the coding sequences of mouse homologues of KIAA gene: III. The complete nucleotide sequences of 500 mouse KIAA-homologous cDNAs identified by screening of terminal sequences of cDNA clones randomly sampled from size-fractionated libraries.</title>
        <authorList>
            <person name="Okazaki N."/>
            <person name="Kikuno R."/>
            <person name="Ohara R."/>
            <person name="Inamoto S."/>
            <person name="Koseki H."/>
            <person name="Hiraoka S."/>
            <person name="Saga Y."/>
            <person name="Nagase T."/>
            <person name="Ohara O."/>
            <person name="Koga H."/>
        </authorList>
    </citation>
    <scope>NUCLEOTIDE SEQUENCE [LARGE SCALE MRNA] OF 1245-1946</scope>
    <source>
        <tissue>Brain</tissue>
    </source>
</reference>
<reference key="3">
    <citation type="journal article" date="2007" name="Cell">
        <title>CHD5 is a tumor suppressor at human 1p36.</title>
        <authorList>
            <person name="Bagchi A."/>
            <person name="Papazoglu C."/>
            <person name="Wu Y."/>
            <person name="Capurso D."/>
            <person name="Brodt M."/>
            <person name="Francis D."/>
            <person name="Bredel M."/>
            <person name="Vogel H."/>
            <person name="Mills A.A."/>
        </authorList>
    </citation>
    <scope>FUNCTION IN CELL PROLIFERATION</scope>
</reference>
<reference key="4">
    <citation type="journal article" date="2010" name="Cell">
        <title>A tissue-specific atlas of mouse protein phosphorylation and expression.</title>
        <authorList>
            <person name="Huttlin E.L."/>
            <person name="Jedrychowski M.P."/>
            <person name="Elias J.E."/>
            <person name="Goswami T."/>
            <person name="Rad R."/>
            <person name="Beausoleil S.A."/>
            <person name="Villen J."/>
            <person name="Haas W."/>
            <person name="Sowa M.E."/>
            <person name="Gygi S.P."/>
        </authorList>
    </citation>
    <scope>PHOSPHORYLATION [LARGE SCALE ANALYSIS] AT SER-1556</scope>
    <scope>IDENTIFICATION BY MASS SPECTROMETRY [LARGE SCALE ANALYSIS]</scope>
    <source>
        <tissue>Brain</tissue>
    </source>
</reference>
<reference key="5">
    <citation type="journal article" date="2011" name="PLoS ONE">
        <title>CHD5, a brain-specific paralog of Mi2 chromatin remodeling enzymes, regulates expression of neuronal genes.</title>
        <authorList>
            <person name="Potts R.C."/>
            <person name="Zhang P."/>
            <person name="Wurster A.L."/>
            <person name="Precht P."/>
            <person name="Mughal M.R."/>
            <person name="Wood W.H."/>
            <person name="Zhang Y."/>
            <person name="Becker K.G."/>
            <person name="Mattson M.P."/>
            <person name="Pazin M.J."/>
        </authorList>
    </citation>
    <scope>IDENTIFICATION IN THE NURD COMPLEX</scope>
    <scope>TISSUE SPECIFICITY</scope>
    <scope>DEVELOPMENTAL STAGE</scope>
</reference>
<reference key="6">
    <citation type="journal article" date="2013" name="Cell Rep.">
        <title>Chd5 requires PHD-mediated histone 3 binding for tumor suppression.</title>
        <authorList>
            <person name="Paul S."/>
            <person name="Kuo A."/>
            <person name="Schalch T."/>
            <person name="Vogel H."/>
            <person name="Joshua-Tor L."/>
            <person name="McCombie W.R."/>
            <person name="Gozani O."/>
            <person name="Hammell M."/>
            <person name="Mills A.A."/>
        </authorList>
    </citation>
    <scope>FUNCTION IN TRANSCRIPTION</scope>
    <scope>UNMETHYLATED HISTONE H3K4-BINDING</scope>
    <scope>PHD DOMAINS</scope>
    <scope>SUBCELLULAR LOCATION</scope>
    <scope>MUTAGENESIS OF ASP-346; GLY-355; ASP-361; ASP-415; CYS-432 AND ASP-434</scope>
</reference>
<reference key="7">
    <citation type="journal article" date="2013" name="Dev. Cell">
        <title>CHD5 is required for neurogenesis and has a dual role in facilitating gene expression and polycomb gene repression.</title>
        <authorList>
            <person name="Egan C.M."/>
            <person name="Nyman U."/>
            <person name="Skotte J."/>
            <person name="Streubel G."/>
            <person name="Turner S."/>
            <person name="O'Connell D.J."/>
            <person name="Rraklli V."/>
            <person name="Dolan M.J."/>
            <person name="Chadderton N."/>
            <person name="Hansen K."/>
            <person name="Farrar G.J."/>
            <person name="Helin K."/>
            <person name="Holmberg J."/>
            <person name="Bracken A.P."/>
        </authorList>
    </citation>
    <scope>FUNCTION IN NEURON DIFFERENTIATION</scope>
    <scope>HISTONE H3K27ME3-BINDING</scope>
    <scope>SUBCELLULAR LOCATION</scope>
    <scope>TISSUE SPECIFICITY</scope>
    <scope>DEVELOPMENTAL STAGE</scope>
</reference>
<reference key="8">
    <citation type="journal article" date="2014" name="Mech. Dev.">
        <title>CHD5 is required for spermiogenesis and chromatin condensation.</title>
        <authorList>
            <person name="Zhuang T."/>
            <person name="Hess R.A."/>
            <person name="Kolla V."/>
            <person name="Higashi M."/>
            <person name="Raabe T.D."/>
            <person name="Brodeur G.M."/>
        </authorList>
    </citation>
    <scope>FUNCTION IN SPERMATOGENESIS</scope>
    <scope>DISRUPTION PHENOTYPE</scope>
    <scope>TISSUE SPECIFICITY</scope>
</reference>
<reference key="9">
    <citation type="journal article" date="2016" name="Cell Rep.">
        <title>A Functional Switch of NuRD Chromatin Remodeling Complex Subunits Regulates Mouse Cortical Development.</title>
        <authorList>
            <person name="Nitarska J."/>
            <person name="Smith J.G."/>
            <person name="Sherlock W.T."/>
            <person name="Hillege M.M."/>
            <person name="Nott A."/>
            <person name="Barshop W.D."/>
            <person name="Vashisht A.A."/>
            <person name="Wohlschlegel J.A."/>
            <person name="Mitter R."/>
            <person name="Riccio A."/>
        </authorList>
    </citation>
    <scope>FUNCTION</scope>
    <scope>IDENTIFICATION IN THE NURD COMPLEX</scope>
    <scope>INTERACTION WITH HDAC2</scope>
    <scope>IDENTIFICATION BY MASS SPECTROMETRY</scope>
    <scope>SUBCELLULAR LOCATION</scope>
    <scope>DEVELOPMENTAL STAGE</scope>
</reference>
<organism>
    <name type="scientific">Mus musculus</name>
    <name type="common">Mouse</name>
    <dbReference type="NCBI Taxonomy" id="10090"/>
    <lineage>
        <taxon>Eukaryota</taxon>
        <taxon>Metazoa</taxon>
        <taxon>Chordata</taxon>
        <taxon>Craniata</taxon>
        <taxon>Vertebrata</taxon>
        <taxon>Euteleostomi</taxon>
        <taxon>Mammalia</taxon>
        <taxon>Eutheria</taxon>
        <taxon>Euarchontoglires</taxon>
        <taxon>Glires</taxon>
        <taxon>Rodentia</taxon>
        <taxon>Myomorpha</taxon>
        <taxon>Muroidea</taxon>
        <taxon>Muridae</taxon>
        <taxon>Murinae</taxon>
        <taxon>Mus</taxon>
        <taxon>Mus</taxon>
    </lineage>
</organism>
<accession>A2A8L1</accession>
<accession>Q6ZQB2</accession>
<dbReference type="EC" id="3.6.4.-" evidence="2"/>
<dbReference type="EMBL" id="AL611985">
    <property type="status" value="NOT_ANNOTATED_CDS"/>
    <property type="molecule type" value="Genomic_DNA"/>
</dbReference>
<dbReference type="EMBL" id="AK129145">
    <property type="protein sequence ID" value="BAC97955.1"/>
    <property type="molecule type" value="mRNA"/>
</dbReference>
<dbReference type="CCDS" id="CCDS89866.1"/>
<dbReference type="RefSeq" id="NP_001356172.1">
    <property type="nucleotide sequence ID" value="NM_001369243.1"/>
</dbReference>
<dbReference type="RefSeq" id="XP_006538995.1">
    <property type="nucleotide sequence ID" value="XM_006538932.2"/>
</dbReference>
<dbReference type="SMR" id="A2A8L1"/>
<dbReference type="BioGRID" id="234678">
    <property type="interactions" value="13"/>
</dbReference>
<dbReference type="FunCoup" id="A2A8L1">
    <property type="interactions" value="1086"/>
</dbReference>
<dbReference type="IntAct" id="A2A8L1">
    <property type="interactions" value="1"/>
</dbReference>
<dbReference type="STRING" id="10090.ENSMUSP00000030775"/>
<dbReference type="GlyGen" id="A2A8L1">
    <property type="glycosylation" value="1 site"/>
</dbReference>
<dbReference type="iPTMnet" id="A2A8L1"/>
<dbReference type="PhosphoSitePlus" id="A2A8L1"/>
<dbReference type="jPOST" id="A2A8L1"/>
<dbReference type="PaxDb" id="10090-ENSMUSP00000030775"/>
<dbReference type="PeptideAtlas" id="A2A8L1"/>
<dbReference type="ProteomicsDB" id="281603"/>
<dbReference type="Pumba" id="A2A8L1"/>
<dbReference type="Antibodypedia" id="27125">
    <property type="antibodies" value="133 antibodies from 29 providers"/>
</dbReference>
<dbReference type="Ensembl" id="ENSMUST00000005175.5">
    <property type="protein sequence ID" value="ENSMUSP00000005175.5"/>
    <property type="gene ID" value="ENSMUSG00000005045.17"/>
</dbReference>
<dbReference type="GeneID" id="269610"/>
<dbReference type="AGR" id="MGI:3036258"/>
<dbReference type="MGI" id="MGI:3036258">
    <property type="gene designation" value="Chd5"/>
</dbReference>
<dbReference type="VEuPathDB" id="HostDB:ENSMUSG00000005045"/>
<dbReference type="eggNOG" id="KOG0383">
    <property type="taxonomic scope" value="Eukaryota"/>
</dbReference>
<dbReference type="GeneTree" id="ENSGT00940000159249"/>
<dbReference type="InParanoid" id="A2A8L1"/>
<dbReference type="OrthoDB" id="5857104at2759"/>
<dbReference type="PhylomeDB" id="A2A8L1"/>
<dbReference type="BioGRID-ORCS" id="269610">
    <property type="hits" value="6 hits in 80 CRISPR screens"/>
</dbReference>
<dbReference type="PRO" id="PR:A2A8L1"/>
<dbReference type="Proteomes" id="UP000000589">
    <property type="component" value="Chromosome 4"/>
</dbReference>
<dbReference type="RNAct" id="A2A8L1">
    <property type="molecule type" value="protein"/>
</dbReference>
<dbReference type="Bgee" id="ENSMUSG00000005045">
    <property type="expression patterns" value="Expressed in subiculum and 115 other cell types or tissues"/>
</dbReference>
<dbReference type="ExpressionAtlas" id="A2A8L1">
    <property type="expression patterns" value="baseline and differential"/>
</dbReference>
<dbReference type="GO" id="GO:0000792">
    <property type="term" value="C:heterochromatin"/>
    <property type="evidence" value="ECO:0000314"/>
    <property type="project" value="UniProtKB"/>
</dbReference>
<dbReference type="GO" id="GO:0005634">
    <property type="term" value="C:nucleus"/>
    <property type="evidence" value="ECO:0000314"/>
    <property type="project" value="UniProtKB"/>
</dbReference>
<dbReference type="GO" id="GO:0016581">
    <property type="term" value="C:NuRD complex"/>
    <property type="evidence" value="ECO:0000314"/>
    <property type="project" value="UniProtKB"/>
</dbReference>
<dbReference type="GO" id="GO:0005524">
    <property type="term" value="F:ATP binding"/>
    <property type="evidence" value="ECO:0007669"/>
    <property type="project" value="UniProtKB-KW"/>
</dbReference>
<dbReference type="GO" id="GO:0016887">
    <property type="term" value="F:ATP hydrolysis activity"/>
    <property type="evidence" value="ECO:0007669"/>
    <property type="project" value="RHEA"/>
</dbReference>
<dbReference type="GO" id="GO:0003677">
    <property type="term" value="F:DNA binding"/>
    <property type="evidence" value="ECO:0007669"/>
    <property type="project" value="UniProtKB-KW"/>
</dbReference>
<dbReference type="GO" id="GO:0004386">
    <property type="term" value="F:helicase activity"/>
    <property type="evidence" value="ECO:0007669"/>
    <property type="project" value="UniProtKB-KW"/>
</dbReference>
<dbReference type="GO" id="GO:0042393">
    <property type="term" value="F:histone binding"/>
    <property type="evidence" value="ECO:0000314"/>
    <property type="project" value="GO_Central"/>
</dbReference>
<dbReference type="GO" id="GO:0042826">
    <property type="term" value="F:histone deacetylase binding"/>
    <property type="evidence" value="ECO:0000353"/>
    <property type="project" value="UniProtKB"/>
</dbReference>
<dbReference type="GO" id="GO:0061628">
    <property type="term" value="F:histone H3K27me3 reader activity"/>
    <property type="evidence" value="ECO:0000314"/>
    <property type="project" value="UniProtKB"/>
</dbReference>
<dbReference type="GO" id="GO:0008270">
    <property type="term" value="F:zinc ion binding"/>
    <property type="evidence" value="ECO:0007669"/>
    <property type="project" value="UniProtKB-KW"/>
</dbReference>
<dbReference type="GO" id="GO:0021895">
    <property type="term" value="P:cerebral cortex neuron differentiation"/>
    <property type="evidence" value="ECO:0000315"/>
    <property type="project" value="UniProtKB"/>
</dbReference>
<dbReference type="GO" id="GO:0006338">
    <property type="term" value="P:chromatin remodeling"/>
    <property type="evidence" value="ECO:0000250"/>
    <property type="project" value="UniProtKB"/>
</dbReference>
<dbReference type="GO" id="GO:0008285">
    <property type="term" value="P:negative regulation of cell population proliferation"/>
    <property type="evidence" value="ECO:0000315"/>
    <property type="project" value="UniProtKB"/>
</dbReference>
<dbReference type="GO" id="GO:0000122">
    <property type="term" value="P:negative regulation of transcription by RNA polymerase II"/>
    <property type="evidence" value="ECO:0000315"/>
    <property type="project" value="GO_Central"/>
</dbReference>
<dbReference type="GO" id="GO:1901798">
    <property type="term" value="P:positive regulation of signal transduction by p53 class mediator"/>
    <property type="evidence" value="ECO:0000315"/>
    <property type="project" value="UniProtKB"/>
</dbReference>
<dbReference type="GO" id="GO:0045595">
    <property type="term" value="P:regulation of cell differentiation"/>
    <property type="evidence" value="ECO:0000315"/>
    <property type="project" value="UniProtKB"/>
</dbReference>
<dbReference type="GO" id="GO:0035092">
    <property type="term" value="P:sperm DNA condensation"/>
    <property type="evidence" value="ECO:0000315"/>
    <property type="project" value="UniProtKB"/>
</dbReference>
<dbReference type="CDD" id="cd18667">
    <property type="entry name" value="CD1_tandem_CHD3-4_like"/>
    <property type="match status" value="1"/>
</dbReference>
<dbReference type="CDD" id="cd18662">
    <property type="entry name" value="CD2_tandem_CHD3-4_like"/>
    <property type="match status" value="1"/>
</dbReference>
<dbReference type="CDD" id="cd18057">
    <property type="entry name" value="DEXHc_CHD5"/>
    <property type="match status" value="1"/>
</dbReference>
<dbReference type="CDD" id="cd15531">
    <property type="entry name" value="PHD1_CHD_II"/>
    <property type="match status" value="1"/>
</dbReference>
<dbReference type="CDD" id="cd15532">
    <property type="entry name" value="PHD2_CHD_II"/>
    <property type="match status" value="1"/>
</dbReference>
<dbReference type="CDD" id="cd18793">
    <property type="entry name" value="SF2_C_SNF"/>
    <property type="match status" value="1"/>
</dbReference>
<dbReference type="FunFam" id="1.10.10.60:FF:000037">
    <property type="entry name" value="chromodomain-helicase-DNA-binding protein 3 isoform X1"/>
    <property type="match status" value="1"/>
</dbReference>
<dbReference type="FunFam" id="2.40.50.40:FF:000003">
    <property type="entry name" value="chromodomain-helicase-DNA-binding protein 3 isoform X1"/>
    <property type="match status" value="1"/>
</dbReference>
<dbReference type="FunFam" id="3.30.40.10:FF:000001">
    <property type="entry name" value="chromodomain-helicase-DNA-binding protein 3 isoform X1"/>
    <property type="match status" value="1"/>
</dbReference>
<dbReference type="FunFam" id="3.40.50.10810:FF:000001">
    <property type="entry name" value="chromodomain-helicase-DNA-binding protein 3 isoform X1"/>
    <property type="match status" value="1"/>
</dbReference>
<dbReference type="FunFam" id="3.30.40.10:FF:000011">
    <property type="entry name" value="chromodomain-helicase-DNA-binding protein 4 isoform X1"/>
    <property type="match status" value="1"/>
</dbReference>
<dbReference type="FunFam" id="3.40.50.300:FF:000015">
    <property type="entry name" value="chromodomain-helicase-DNA-binding protein 9 isoform X1"/>
    <property type="match status" value="1"/>
</dbReference>
<dbReference type="Gene3D" id="2.40.50.40">
    <property type="match status" value="2"/>
</dbReference>
<dbReference type="Gene3D" id="1.10.10.60">
    <property type="entry name" value="Homeodomain-like"/>
    <property type="match status" value="1"/>
</dbReference>
<dbReference type="Gene3D" id="3.40.50.300">
    <property type="entry name" value="P-loop containing nucleotide triphosphate hydrolases"/>
    <property type="match status" value="1"/>
</dbReference>
<dbReference type="Gene3D" id="3.40.50.10810">
    <property type="entry name" value="Tandem AAA-ATPase domain"/>
    <property type="match status" value="1"/>
</dbReference>
<dbReference type="Gene3D" id="3.30.40.10">
    <property type="entry name" value="Zinc/RING finger domain, C3HC4 (zinc finger)"/>
    <property type="match status" value="2"/>
</dbReference>
<dbReference type="InterPro" id="IPR012957">
    <property type="entry name" value="CHD_C2"/>
</dbReference>
<dbReference type="InterPro" id="IPR009462">
    <property type="entry name" value="CHD_II_SANT-like"/>
</dbReference>
<dbReference type="InterPro" id="IPR012958">
    <property type="entry name" value="CHD_N"/>
</dbReference>
<dbReference type="InterPro" id="IPR016197">
    <property type="entry name" value="Chromo-like_dom_sf"/>
</dbReference>
<dbReference type="InterPro" id="IPR000953">
    <property type="entry name" value="Chromo/chromo_shadow_dom"/>
</dbReference>
<dbReference type="InterPro" id="IPR023780">
    <property type="entry name" value="Chromo_domain"/>
</dbReference>
<dbReference type="InterPro" id="IPR028727">
    <property type="entry name" value="DEXHc_CHD5"/>
</dbReference>
<dbReference type="InterPro" id="IPR002464">
    <property type="entry name" value="DNA/RNA_helicase_DEAH_CS"/>
</dbReference>
<dbReference type="InterPro" id="IPR009463">
    <property type="entry name" value="DUF1087"/>
</dbReference>
<dbReference type="InterPro" id="IPR014001">
    <property type="entry name" value="Helicase_ATP-bd"/>
</dbReference>
<dbReference type="InterPro" id="IPR001650">
    <property type="entry name" value="Helicase_C-like"/>
</dbReference>
<dbReference type="InterPro" id="IPR027417">
    <property type="entry name" value="P-loop_NTPase"/>
</dbReference>
<dbReference type="InterPro" id="IPR038718">
    <property type="entry name" value="SNF2-like_sf"/>
</dbReference>
<dbReference type="InterPro" id="IPR049730">
    <property type="entry name" value="SNF2/RAD54-like_C"/>
</dbReference>
<dbReference type="InterPro" id="IPR000330">
    <property type="entry name" value="SNF2_N"/>
</dbReference>
<dbReference type="InterPro" id="IPR019786">
    <property type="entry name" value="Zinc_finger_PHD-type_CS"/>
</dbReference>
<dbReference type="InterPro" id="IPR011011">
    <property type="entry name" value="Znf_FYVE_PHD"/>
</dbReference>
<dbReference type="InterPro" id="IPR001965">
    <property type="entry name" value="Znf_PHD"/>
</dbReference>
<dbReference type="InterPro" id="IPR019787">
    <property type="entry name" value="Znf_PHD-finger"/>
</dbReference>
<dbReference type="InterPro" id="IPR013083">
    <property type="entry name" value="Znf_RING/FYVE/PHD"/>
</dbReference>
<dbReference type="PANTHER" id="PTHR45623">
    <property type="entry name" value="CHROMODOMAIN-HELICASE-DNA-BINDING PROTEIN 3-RELATED-RELATED"/>
    <property type="match status" value="1"/>
</dbReference>
<dbReference type="PANTHER" id="PTHR45623:SF6">
    <property type="entry name" value="CHROMODOMAIN-HELICASE-DNA-BINDING PROTEIN 5"/>
    <property type="match status" value="1"/>
</dbReference>
<dbReference type="Pfam" id="PF08074">
    <property type="entry name" value="CHDCT2"/>
    <property type="match status" value="1"/>
</dbReference>
<dbReference type="Pfam" id="PF06461">
    <property type="entry name" value="CHDII_SANT-like"/>
    <property type="match status" value="1"/>
</dbReference>
<dbReference type="Pfam" id="PF08073">
    <property type="entry name" value="CHDNT"/>
    <property type="match status" value="1"/>
</dbReference>
<dbReference type="Pfam" id="PF00385">
    <property type="entry name" value="Chromo"/>
    <property type="match status" value="1"/>
</dbReference>
<dbReference type="Pfam" id="PF06465">
    <property type="entry name" value="DUF1087"/>
    <property type="match status" value="1"/>
</dbReference>
<dbReference type="Pfam" id="PF00271">
    <property type="entry name" value="Helicase_C"/>
    <property type="match status" value="1"/>
</dbReference>
<dbReference type="Pfam" id="PF00628">
    <property type="entry name" value="PHD"/>
    <property type="match status" value="2"/>
</dbReference>
<dbReference type="Pfam" id="PF00176">
    <property type="entry name" value="SNF2-rel_dom"/>
    <property type="match status" value="1"/>
</dbReference>
<dbReference type="SMART" id="SM00298">
    <property type="entry name" value="CHROMO"/>
    <property type="match status" value="2"/>
</dbReference>
<dbReference type="SMART" id="SM00487">
    <property type="entry name" value="DEXDc"/>
    <property type="match status" value="1"/>
</dbReference>
<dbReference type="SMART" id="SM01146">
    <property type="entry name" value="DUF1086"/>
    <property type="match status" value="1"/>
</dbReference>
<dbReference type="SMART" id="SM01147">
    <property type="entry name" value="DUF1087"/>
    <property type="match status" value="1"/>
</dbReference>
<dbReference type="SMART" id="SM00490">
    <property type="entry name" value="HELICc"/>
    <property type="match status" value="1"/>
</dbReference>
<dbReference type="SMART" id="SM00249">
    <property type="entry name" value="PHD"/>
    <property type="match status" value="2"/>
</dbReference>
<dbReference type="SUPFAM" id="SSF54160">
    <property type="entry name" value="Chromo domain-like"/>
    <property type="match status" value="2"/>
</dbReference>
<dbReference type="SUPFAM" id="SSF57903">
    <property type="entry name" value="FYVE/PHD zinc finger"/>
    <property type="match status" value="1"/>
</dbReference>
<dbReference type="SUPFAM" id="SSF52540">
    <property type="entry name" value="P-loop containing nucleoside triphosphate hydrolases"/>
    <property type="match status" value="2"/>
</dbReference>
<dbReference type="PROSITE" id="PS50013">
    <property type="entry name" value="CHROMO_2"/>
    <property type="match status" value="2"/>
</dbReference>
<dbReference type="PROSITE" id="PS00690">
    <property type="entry name" value="DEAH_ATP_HELICASE"/>
    <property type="match status" value="1"/>
</dbReference>
<dbReference type="PROSITE" id="PS51192">
    <property type="entry name" value="HELICASE_ATP_BIND_1"/>
    <property type="match status" value="1"/>
</dbReference>
<dbReference type="PROSITE" id="PS51194">
    <property type="entry name" value="HELICASE_CTER"/>
    <property type="match status" value="1"/>
</dbReference>
<dbReference type="PROSITE" id="PS01359">
    <property type="entry name" value="ZF_PHD_1"/>
    <property type="match status" value="2"/>
</dbReference>
<dbReference type="PROSITE" id="PS50016">
    <property type="entry name" value="ZF_PHD_2"/>
    <property type="match status" value="2"/>
</dbReference>
<name>CHD5_MOUSE</name>
<evidence type="ECO:0000250" key="1"/>
<evidence type="ECO:0000250" key="2">
    <source>
        <dbReference type="UniProtKB" id="Q12873"/>
    </source>
</evidence>
<evidence type="ECO:0000250" key="3">
    <source>
        <dbReference type="UniProtKB" id="Q8TDI0"/>
    </source>
</evidence>
<evidence type="ECO:0000255" key="4">
    <source>
        <dbReference type="PROSITE-ProRule" id="PRU00053"/>
    </source>
</evidence>
<evidence type="ECO:0000255" key="5">
    <source>
        <dbReference type="PROSITE-ProRule" id="PRU00146"/>
    </source>
</evidence>
<evidence type="ECO:0000255" key="6">
    <source>
        <dbReference type="PROSITE-ProRule" id="PRU00541"/>
    </source>
</evidence>
<evidence type="ECO:0000255" key="7">
    <source>
        <dbReference type="PROSITE-ProRule" id="PRU00542"/>
    </source>
</evidence>
<evidence type="ECO:0000256" key="8">
    <source>
        <dbReference type="SAM" id="MobiDB-lite"/>
    </source>
</evidence>
<evidence type="ECO:0000269" key="9">
    <source>
    </source>
</evidence>
<evidence type="ECO:0000269" key="10">
    <source>
    </source>
</evidence>
<evidence type="ECO:0000269" key="11">
    <source>
    </source>
</evidence>
<evidence type="ECO:0000269" key="12">
    <source>
    </source>
</evidence>
<evidence type="ECO:0000269" key="13">
    <source>
    </source>
</evidence>
<evidence type="ECO:0000269" key="14">
    <source>
    </source>
</evidence>
<evidence type="ECO:0000305" key="15"/>
<evidence type="ECO:0007744" key="16">
    <source>
    </source>
</evidence>
<protein>
    <recommendedName>
        <fullName>Chromodomain-helicase-DNA-binding protein 5</fullName>
        <shortName>CHD-5</shortName>
        <ecNumber evidence="2">3.6.4.-</ecNumber>
    </recommendedName>
    <alternativeName>
        <fullName>ATP-dependent helicase CHD5</fullName>
    </alternativeName>
</protein>
<comment type="function">
    <text evidence="9 11 12 13 14">ATP-dependent chromatin-remodeling factor that binds DNA through histones and regulates gene transcription (PubMed:23318260). May specifically recognize and bind trimethylated 'Lys-27' (H3K27me3) and non-methylated 'Lys-4' of histone H3 (PubMed:23318260, PubMed:23948251). Acts as a component of the histone deacetylase NuRD complex which participates in the remodeling of chromatin (PubMed:27806305). Plays a role in the development of the nervous system by activating the expression of genes promoting neuron terminal differentiation (PubMed:23948251, PubMed:27806305). In parallel, it may also positively regulate the trimethylation of histone H3 at 'Lys-27' thereby specifically repressing genes that promote the differentiation into non-neuronal cell lineages (PubMed:23948251). Regulates the expression of genes involved in cell proliferation and differentiation (PubMed:17289567). Downstream activated genes may include CDKN2A that positively regulates the p53/TP53 pathway, which in turn, prevents cell proliferation (PubMed:17289567). In spermatogenesis, it probably regulates histone hyperacetylation and the replacement of histones by transition proteins in chromatin, a crucial step in the condensation of spermatid chromatin and the production of functional spermatozoa (PubMed:24252660).</text>
</comment>
<comment type="catalytic activity">
    <reaction evidence="2">
        <text>ATP + H2O = ADP + phosphate + H(+)</text>
        <dbReference type="Rhea" id="RHEA:13065"/>
        <dbReference type="ChEBI" id="CHEBI:15377"/>
        <dbReference type="ChEBI" id="CHEBI:15378"/>
        <dbReference type="ChEBI" id="CHEBI:30616"/>
        <dbReference type="ChEBI" id="CHEBI:43474"/>
        <dbReference type="ChEBI" id="CHEBI:456216"/>
    </reaction>
</comment>
<comment type="subunit">
    <text evidence="10 14">Component of the nucleosome remodeling and deacetylase (NuRD) repressor complex, composed of core proteins MTA1, MTA2, MTA3, RBBP4, RBBP7, HDAC1, HDAC2, MBD2, MBD3, and peripherally associated proteins CDK2AP1, CDK2AP2, GATAD2A, GATAD2B, CHD3, CHD4 and CHD5 (PubMed:21931736, PubMed:27806305). The exact stoichiometry of the NuRD complex is unknown, and some subunits such as MBD2 and MBD3, GATAD2A and GATAD2B, and CHD3, CHD4 and CHD5 define mutually exclusive NuRD complexes (PubMed:27806305). Interacts with HDAC2 (PubMed:27806305).</text>
</comment>
<comment type="subcellular location">
    <subcellularLocation>
        <location evidence="11 12">Nucleus</location>
    </subcellularLocation>
    <subcellularLocation>
        <location evidence="14">Chromosome</location>
    </subcellularLocation>
</comment>
<comment type="tissue specificity">
    <text evidence="10 12 13">Specifically expressed by neurons in brain, retina and adrenal gland (at protein level). Also detected in testis.</text>
</comment>
<comment type="developmental stage">
    <text evidence="10 12 14">Detected at 15.5 dpc in the cortex, expression increases at 18.5 dpc, after birth and to adulthood. Expression increases in late-stage neuronal progenitor during their terminal differentiation.</text>
</comment>
<comment type="domain">
    <text evidence="11">The PHD domains mediate specific binding to histone H3 unmethylated at 'Lys-4' and may preferentially recruit the protein to transcriptionally inactive genes.</text>
</comment>
<comment type="domain">
    <text evidence="12">The chromo domains mediate specific binding to histone H3 trimethylated at 'Lys-27' (H3K27me3) and may be required in neuron differentiation for proper gene regulation.</text>
</comment>
<comment type="PTM">
    <text evidence="3">Methylated at Gln-1392 by N6AMT1.</text>
</comment>
<comment type="disruption phenotype">
    <text evidence="13">Mutant males are infertile. Mating occurs, but the males are sterile, displaying abnormal spermatogenesis. Disruption of the gene has no effect on the fertility of females. Infertility is due to sperm morphological abnormalities and complete immotility that are observed in all mice. A variable sperm counts, with a complete absence is some individuals is also observed. Spermatogenesis is normal from spermatogonia through meiotic division of spermatocytes. However, at stage IX, step 9, abnormal nuclear morphology of differentiating spermatids appears. It is associated with increased histone retention and decreased histone H4 hyperacetylation, an important step in spermatid chromatid condensation. Finally, spermiation is also affected.</text>
</comment>
<comment type="similarity">
    <text evidence="15">Belongs to the SNF2/RAD54 helicase family.</text>
</comment>
<sequence>MRGPLGTEEELPRLFAEEMENEEEMSEEEDGGLEGFEDFFPAEPVSLPKKKPKKLKESKSSKGKRKKKEGSNDEMSDNEEDLEEKSESEGSDYSPTKKKKKKLKEKKEKKEKKEKRKKRGEDEDDNDDGGLKEPKSSGQLMAEWGLDDVDYLFSEDDYHTLTNYKAFSQFLRPLIAKKNPKIPMSKMMTVLGAKWREFSANNPFKGSSAAAAAAAVAAAVETVTIAPPLAISPQQVPQTLPIRKAKTKEGKGPGVRKKNKGAKDSKKKGRGKRVAGLKFRFGGISKRKKGSSSEEDEREDSDLDNASIHSSSVRSECSAALGKKNKRRRKKKRIDDGDGYETDHQDYCEVCQQGGEIILCDTCPRAYHLVCLDPELEKAPEGKWSCPHCEKEGIQWEPKDDDEEEEEGGCEEEEDDHMEFCRVCKDGGELLCCDACPSSYHLHCLNPPLPEIPNGEWLCPRCTCPPLKGKVQRILHWRWTEPPAPFVVGLPGPEVEPGMPPPRPLEGIPEREFFVKWAGLSYWHCSWVKELQLELYHTVMYRNYQRKNDMDEPPPFDYGSGDEDGKSEKRKNKDPLYAKMEERFYRYGIKPEWMMVHRILNHSFDKKGDIHYLIKWKDLPYDQCTWEIDEIDIPYYDNLKQAYWGHRELMLGEDARLPKRLVKKGKKLKDDKQEKPPDTPIVDPTVKFDKQPWYIDATGGTLHPYQLEGLNWLRFSWAQGTDTILADEMGLGKTVQTIVFLYSLYKEGHSKGPYLVSAPLSTIINWEREFEMWAPDFYVVTYTGDKESRSVIRENEFSFEDNAIRGGKKVFRMKKEVQIKFHVLLTSYELITIDQAILGSIEWACLVVDEAHRLKNNQSKFFRVLNSYKIDYKLLLTGTPLQNNLEELFHLLNFLTPERFNNLEGFLEEFADISKEDQIKKLHDLLGPHMLRRLKADVFKNMPAKTELIVRVELSQMQKKYYKFILTRNFEALNSKGGGNQVSLLNIMMDLKKCCNHPYLFPVAAVEAPVLPNGSYDGSSLVKSSGKLMLLQKMLKKLRDEGHRVLIFSQMTKMLDLLEDFLEYEGYKYERIDGGITGGLRQEAIDRFNAPGAQQFCFLLSTRAGGLGINLATADTVIIYDSDWNPHNDIQAFSRAHRIGQNKKVMIYRFVTRASVEERITQVAKRKMMLTHLVVRPGLGSKSGSMTKQELDDILKFGTEELFKDDVEGMMSQGQRPTTPIPDIQSTKGGSLTAGAKKKHGSTPPGDNKDVEDSSVIHYDDAAISKLLDRNQDATDDTELQNMNEYLSSFKVAQYVVREEDGVEEVEREVIKQEENVDPDYWEKLLRHHYEQQQEDLARNLGKGKRIRKQVNYNDASQEDQEWQDELSDNQSEYSIGSEDEDEDFEERPEGQSGRRQSRRQLKSDRDKPLPPLLARVGGNIEVLGFNARQRKAFLNAIMRWGMPPQDAFNSHWLVRDLRGKSEKEFRAYVSLFMRHLCEPGADGAETFADGVPREGLSRQHVLTRIGVMSLVRKKVQEFEHVNGKYSTPDLVPEGAEGKKPGEVISSDPNTPVPASPAQLPPAPLGLTDKMEAQLGYTDEKESGMQKPKKSLEIQTLPTALDRVEGEDKHQSSDSKDRAREERTEEVEKAQGSPEQPLKEEVLPDKEPIPDKPELSLGHSGDFRPDDPKTEEKEPGETQQNGDREEDEEGKKEDKNGKFKFMFNIADGGFTELHTLWQNEERAAVSSGKIYEIWHRRHDYWLLAGIVTHGYARWQDIQNDPRYMILNEPFKSEIHKGNYLEMKNKFLARRFKLLEQALVIEEQLRRAAYLNMTQDPNHPAMALNARLAEVECLAESHQHLSKESLAGNKPANAVLHKVLNQLEELLSDMKADVTRLPSMLSRIPPVAARLQMSERSILSRLTNRAGDPTIQQTSSRRRDFPLFQRSFPAEPSHLPNPRGREKLQPF</sequence>
<keyword id="KW-0067">ATP-binding</keyword>
<keyword id="KW-0156">Chromatin regulator</keyword>
<keyword id="KW-0158">Chromosome</keyword>
<keyword id="KW-0221">Differentiation</keyword>
<keyword id="KW-0238">DNA-binding</keyword>
<keyword id="KW-0378">Hydrolase</keyword>
<keyword id="KW-0479">Metal-binding</keyword>
<keyword id="KW-0488">Methylation</keyword>
<keyword id="KW-0524">Neurogenesis</keyword>
<keyword id="KW-0547">Nucleotide-binding</keyword>
<keyword id="KW-0539">Nucleus</keyword>
<keyword id="KW-0597">Phosphoprotein</keyword>
<keyword id="KW-1185">Reference proteome</keyword>
<keyword id="KW-0677">Repeat</keyword>
<keyword id="KW-0744">Spermatogenesis</keyword>
<keyword id="KW-0804">Transcription</keyword>
<keyword id="KW-0805">Transcription regulation</keyword>
<keyword id="KW-0043">Tumor suppressor</keyword>
<keyword id="KW-0862">Zinc</keyword>
<keyword id="KW-0863">Zinc-finger</keyword>
<feature type="chain" id="PRO_0000429326" description="Chromodomain-helicase-DNA-binding protein 5">
    <location>
        <begin position="1"/>
        <end position="1946"/>
    </location>
</feature>
<feature type="domain" description="Chromo 1" evidence="4">
    <location>
        <begin position="499"/>
        <end position="556"/>
    </location>
</feature>
<feature type="domain" description="Chromo 2" evidence="4">
    <location>
        <begin position="594"/>
        <end position="655"/>
    </location>
</feature>
<feature type="domain" description="Helicase ATP-binding" evidence="6">
    <location>
        <begin position="714"/>
        <end position="898"/>
    </location>
</feature>
<feature type="domain" description="Helicase C-terminal" evidence="7">
    <location>
        <begin position="1030"/>
        <end position="1195"/>
    </location>
</feature>
<feature type="zinc finger region" description="PHD-type 1" evidence="5">
    <location>
        <begin position="345"/>
        <end position="392"/>
    </location>
</feature>
<feature type="zinc finger region" description="PHD-type 2" evidence="5">
    <location>
        <begin position="418"/>
        <end position="465"/>
    </location>
</feature>
<feature type="region of interest" description="Disordered" evidence="8">
    <location>
        <begin position="1"/>
        <end position="140"/>
    </location>
</feature>
<feature type="region of interest" description="Disordered" evidence="8">
    <location>
        <begin position="236"/>
        <end position="272"/>
    </location>
</feature>
<feature type="region of interest" description="Disordered" evidence="8">
    <location>
        <begin position="285"/>
        <end position="340"/>
    </location>
</feature>
<feature type="region of interest" description="Histone-binding" evidence="1">
    <location>
        <begin position="345"/>
        <end position="655"/>
    </location>
</feature>
<feature type="region of interest" description="Disordered" evidence="8">
    <location>
        <begin position="551"/>
        <end position="573"/>
    </location>
</feature>
<feature type="region of interest" description="Disordered" evidence="8">
    <location>
        <begin position="1210"/>
        <end position="1254"/>
    </location>
</feature>
<feature type="region of interest" description="Disordered" evidence="8">
    <location>
        <begin position="1353"/>
        <end position="1413"/>
    </location>
</feature>
<feature type="region of interest" description="Disordered" evidence="8">
    <location>
        <begin position="1525"/>
        <end position="1566"/>
    </location>
</feature>
<feature type="region of interest" description="Disordered" evidence="8">
    <location>
        <begin position="1579"/>
        <end position="1696"/>
    </location>
</feature>
<feature type="region of interest" description="Disordered" evidence="8">
    <location>
        <begin position="1926"/>
        <end position="1946"/>
    </location>
</feature>
<feature type="short sequence motif" description="DEAH box">
    <location>
        <begin position="849"/>
        <end position="852"/>
    </location>
</feature>
<feature type="compositionally biased region" description="Acidic residues" evidence="8">
    <location>
        <begin position="17"/>
        <end position="37"/>
    </location>
</feature>
<feature type="compositionally biased region" description="Acidic residues" evidence="8">
    <location>
        <begin position="72"/>
        <end position="90"/>
    </location>
</feature>
<feature type="compositionally biased region" description="Basic residues" evidence="8">
    <location>
        <begin position="96"/>
        <end position="118"/>
    </location>
</feature>
<feature type="compositionally biased region" description="Basic residues" evidence="8">
    <location>
        <begin position="254"/>
        <end position="272"/>
    </location>
</feature>
<feature type="compositionally biased region" description="Acidic residues" evidence="8">
    <location>
        <begin position="293"/>
        <end position="303"/>
    </location>
</feature>
<feature type="compositionally biased region" description="Basic residues" evidence="8">
    <location>
        <begin position="323"/>
        <end position="332"/>
    </location>
</feature>
<feature type="compositionally biased region" description="Basic and acidic residues" evidence="8">
    <location>
        <begin position="563"/>
        <end position="573"/>
    </location>
</feature>
<feature type="compositionally biased region" description="Polar residues" evidence="8">
    <location>
        <begin position="1212"/>
        <end position="1230"/>
    </location>
</feature>
<feature type="compositionally biased region" description="Acidic residues" evidence="8">
    <location>
        <begin position="1357"/>
        <end position="1368"/>
    </location>
</feature>
<feature type="compositionally biased region" description="Acidic residues" evidence="8">
    <location>
        <begin position="1378"/>
        <end position="1387"/>
    </location>
</feature>
<feature type="compositionally biased region" description="Pro residues" evidence="8">
    <location>
        <begin position="1551"/>
        <end position="1564"/>
    </location>
</feature>
<feature type="compositionally biased region" description="Basic and acidic residues" evidence="8">
    <location>
        <begin position="1602"/>
        <end position="1629"/>
    </location>
</feature>
<feature type="compositionally biased region" description="Basic and acidic residues" evidence="8">
    <location>
        <begin position="1637"/>
        <end position="1654"/>
    </location>
</feature>
<feature type="compositionally biased region" description="Basic and acidic residues" evidence="8">
    <location>
        <begin position="1661"/>
        <end position="1676"/>
    </location>
</feature>
<feature type="binding site" evidence="6">
    <location>
        <begin position="727"/>
        <end position="734"/>
    </location>
    <ligand>
        <name>ATP</name>
        <dbReference type="ChEBI" id="CHEBI:30616"/>
    </ligand>
</feature>
<feature type="modified residue" description="N5-methylglutamine" evidence="3">
    <location>
        <position position="1392"/>
    </location>
</feature>
<feature type="modified residue" description="Phosphoserine" evidence="16">
    <location>
        <position position="1556"/>
    </location>
</feature>
<feature type="mutagenesis site" description="No effect on interaction with histone H3 unmethylated at 'Lys-4'. No significant effect on the ability to repress target genes expression. No effect on regulation of cell proliferation." evidence="11">
    <original>D</original>
    <variation>A</variation>
    <location>
        <position position="346"/>
    </location>
</feature>
<feature type="mutagenesis site" description="Loss of the ability to negatively regulate cell proliferation." evidence="11">
    <original>G</original>
    <variation>A</variation>
    <location>
        <position position="355"/>
    </location>
</feature>
<feature type="mutagenesis site" description="Loss of interaction with histone H3 unmethylated at 'Lys-4'. Loss of the ability to repress target genes expression. Loss of the ability to negatively regulate cell proliferation." evidence="11">
    <original>D</original>
    <variation>A</variation>
    <location>
        <position position="361"/>
    </location>
</feature>
<feature type="mutagenesis site" description="Loss of interaction with histone H3 unmethylated at 'Lys-4'. Loss of the ability to negatively regulate cell proliferation." evidence="11">
    <original>D</original>
    <variation>A</variation>
    <location>
        <position position="415"/>
    </location>
</feature>
<feature type="mutagenesis site" description="Loss of the ability to negatively regulate cell proliferation." evidence="11">
    <original>C</original>
    <variation>W</variation>
    <location>
        <position position="432"/>
    </location>
</feature>
<feature type="mutagenesis site" description="Loss of interaction with histone H3 unmethylated at 'Lys-4'. Loss of the ability to repress target genes expression. Loss of the ability to negatively regulate cell proliferation." evidence="11">
    <original>D</original>
    <variation>A</variation>
    <location>
        <position position="434"/>
    </location>
</feature>
<proteinExistence type="evidence at protein level"/>